<proteinExistence type="evidence at protein level"/>
<name>IOD1_FELCA</name>
<keyword id="KW-1003">Cell membrane</keyword>
<keyword id="KW-0256">Endoplasmic reticulum</keyword>
<keyword id="KW-0472">Membrane</keyword>
<keyword id="KW-0560">Oxidoreductase</keyword>
<keyword id="KW-1185">Reference proteome</keyword>
<keyword id="KW-0712">Selenocysteine</keyword>
<keyword id="KW-0893">Thyroid hormones biosynthesis</keyword>
<keyword id="KW-0812">Transmembrane</keyword>
<keyword id="KW-1133">Transmembrane helix</keyword>
<feature type="chain" id="PRO_0000247810" description="Type I iodothyronine deiodinase">
    <location>
        <begin position="1"/>
        <end position="244"/>
    </location>
</feature>
<feature type="topological domain" description="Extracellular" evidence="1">
    <location>
        <begin position="1"/>
        <end position="12"/>
    </location>
</feature>
<feature type="transmembrane region" description="Helical; Signal-anchor for type III membrane protein" evidence="5">
    <location>
        <begin position="13"/>
        <end position="33"/>
    </location>
</feature>
<feature type="topological domain" description="Cytoplasmic" evidence="1">
    <location>
        <begin position="34"/>
        <end position="244"/>
    </location>
</feature>
<feature type="active site" evidence="6">
    <location>
        <position position="121"/>
    </location>
</feature>
<feature type="non-standard amino acid" description="Selenocysteine" evidence="1">
    <location>
        <position position="121"/>
    </location>
</feature>
<feature type="mutagenesis site" description="Loss of 3,3',5'-triiodo-L-thyronine deiodination activity." evidence="7">
    <original>L</original>
    <variation>F</variation>
    <location>
        <position position="60"/>
    </location>
</feature>
<feature type="mutagenesis site" description="Loss of 3,3',5'-triiodo-L-thyronine deiodination activity." evidence="7">
    <original>Y</original>
    <variation>L</variation>
    <location>
        <position position="61"/>
    </location>
</feature>
<organism>
    <name type="scientific">Felis catus</name>
    <name type="common">Cat</name>
    <name type="synonym">Felis silvestris catus</name>
    <dbReference type="NCBI Taxonomy" id="9685"/>
    <lineage>
        <taxon>Eukaryota</taxon>
        <taxon>Metazoa</taxon>
        <taxon>Chordata</taxon>
        <taxon>Craniata</taxon>
        <taxon>Vertebrata</taxon>
        <taxon>Euteleostomi</taxon>
        <taxon>Mammalia</taxon>
        <taxon>Eutheria</taxon>
        <taxon>Laurasiatheria</taxon>
        <taxon>Carnivora</taxon>
        <taxon>Feliformia</taxon>
        <taxon>Felidae</taxon>
        <taxon>Felinae</taxon>
        <taxon>Felis</taxon>
    </lineage>
</organism>
<accession>Q6V915</accession>
<comment type="function">
    <text evidence="1 2 3 4 7">Plays a crucial role in the metabolism of thyroid hormones (TH) and has specific roles in TH activation and inactivation by deiodination (PubMed:12960017). Catalyzes the deiodination of L-thyroxine (T4) to 3,5,3'-triiodothyronine (T3) and 3',5'-diiodothyronine (3',5'-T2) to 3'-monoiodothyronine (3'-T1) via outer-ring deiodination (ORD) (By similarity). Catalyzes the deiodination of T4 to 3,3',5'-triiodothyronine (rT3), T3 to 3,3'-diiodothyronine (3,3'-T2), 3,5-diiodothyronine (3,5-T2) to 3-monoiodothyronine (3-T1) and 3,3'-T2 to 3-T1 via inner-ring deiodination (IRD) (By similarity). Catalyzes the deiodination of rT3 to 3,3'-T2 via ORD (PubMed:12960017). Catalyzes the phenolic ring deiodinations of 3,3',5'-triiodothyronamine, 3',5'-diiodothyronamine and 3,3'-diiodothyronamine as well as tyrosyl ring deiodinations of 3,5,3'-triiodothyronamine and 3,5-diiodothyronamine (By similarity). Catalyzes the deiodination of L-thyroxine sulfate and 3,3',5-triiodo-L-thyronine sulfate via IRD and of 3,3',5'-triiodo-L-thyronine sulfate via ORD (By similarity).</text>
</comment>
<comment type="catalytic activity">
    <reaction evidence="6">
        <text>3,3',5-triiodo-L-thyronine + iodide + A + H(+) = L-thyroxine + AH2</text>
        <dbReference type="Rhea" id="RHEA:19745"/>
        <dbReference type="ChEBI" id="CHEBI:13193"/>
        <dbReference type="ChEBI" id="CHEBI:15378"/>
        <dbReference type="ChEBI" id="CHEBI:16382"/>
        <dbReference type="ChEBI" id="CHEBI:17499"/>
        <dbReference type="ChEBI" id="CHEBI:58448"/>
        <dbReference type="ChEBI" id="CHEBI:533015"/>
        <dbReference type="EC" id="1.21.99.4"/>
    </reaction>
    <physiologicalReaction direction="right-to-left" evidence="3">
        <dbReference type="Rhea" id="RHEA:19747"/>
    </physiologicalReaction>
</comment>
<comment type="catalytic activity">
    <reaction evidence="3">
        <text>3,3',5'-triiodo-L-thyronine + iodide + A + H(+) = L-thyroxine + AH2</text>
        <dbReference type="Rhea" id="RHEA:18897"/>
        <dbReference type="ChEBI" id="CHEBI:13193"/>
        <dbReference type="ChEBI" id="CHEBI:15378"/>
        <dbReference type="ChEBI" id="CHEBI:16382"/>
        <dbReference type="ChEBI" id="CHEBI:17499"/>
        <dbReference type="ChEBI" id="CHEBI:57261"/>
        <dbReference type="ChEBI" id="CHEBI:58448"/>
        <dbReference type="EC" id="1.21.99.3"/>
    </reaction>
    <physiologicalReaction direction="right-to-left" evidence="3">
        <dbReference type="Rhea" id="RHEA:18899"/>
    </physiologicalReaction>
</comment>
<comment type="catalytic activity">
    <reaction evidence="7">
        <text>3,3'-diiodo-L-thyronine + iodide + A + H(+) = 3,3',5'-triiodo-L-thyronine + AH2</text>
        <dbReference type="Rhea" id="RHEA:82575"/>
        <dbReference type="ChEBI" id="CHEBI:13193"/>
        <dbReference type="ChEBI" id="CHEBI:15378"/>
        <dbReference type="ChEBI" id="CHEBI:16382"/>
        <dbReference type="ChEBI" id="CHEBI:17499"/>
        <dbReference type="ChEBI" id="CHEBI:57261"/>
        <dbReference type="ChEBI" id="CHEBI:176514"/>
    </reaction>
    <physiologicalReaction direction="right-to-left" evidence="9">
        <dbReference type="Rhea" id="RHEA:82577"/>
    </physiologicalReaction>
</comment>
<comment type="catalytic activity">
    <reaction evidence="3">
        <text>3,3'-diiodo-L-thyronine + iodide + A + H(+) = 3,3',5-triiodo-L-thyronine + AH2</text>
        <dbReference type="Rhea" id="RHEA:82571"/>
        <dbReference type="ChEBI" id="CHEBI:13193"/>
        <dbReference type="ChEBI" id="CHEBI:15378"/>
        <dbReference type="ChEBI" id="CHEBI:16382"/>
        <dbReference type="ChEBI" id="CHEBI:17499"/>
        <dbReference type="ChEBI" id="CHEBI:176514"/>
        <dbReference type="ChEBI" id="CHEBI:533015"/>
    </reaction>
    <physiologicalReaction direction="right-to-left" evidence="3">
        <dbReference type="Rhea" id="RHEA:82573"/>
    </physiologicalReaction>
</comment>
<comment type="catalytic activity">
    <reaction evidence="2">
        <text>3'-iodo-L-thyronine + iodide + A + H(+) = 3',5'-diiodo-L-thyronine + AH2</text>
        <dbReference type="Rhea" id="RHEA:82899"/>
        <dbReference type="ChEBI" id="CHEBI:13193"/>
        <dbReference type="ChEBI" id="CHEBI:15378"/>
        <dbReference type="ChEBI" id="CHEBI:16382"/>
        <dbReference type="ChEBI" id="CHEBI:17499"/>
        <dbReference type="ChEBI" id="CHEBI:195762"/>
        <dbReference type="ChEBI" id="CHEBI:232695"/>
    </reaction>
    <physiologicalReaction direction="right-to-left" evidence="2">
        <dbReference type="Rhea" id="RHEA:82901"/>
    </physiologicalReaction>
</comment>
<comment type="catalytic activity">
    <reaction evidence="4">
        <text>3-iodo-L-thyronine + iodide + A + H(+) = 3,5-diiodo-L-thyronine + AH2</text>
        <dbReference type="Rhea" id="RHEA:82895"/>
        <dbReference type="ChEBI" id="CHEBI:13193"/>
        <dbReference type="ChEBI" id="CHEBI:15378"/>
        <dbReference type="ChEBI" id="CHEBI:16382"/>
        <dbReference type="ChEBI" id="CHEBI:17499"/>
        <dbReference type="ChEBI" id="CHEBI:232626"/>
        <dbReference type="ChEBI" id="CHEBI:232627"/>
    </reaction>
    <physiologicalReaction direction="right-to-left" evidence="4">
        <dbReference type="Rhea" id="RHEA:82897"/>
    </physiologicalReaction>
</comment>
<comment type="catalytic activity">
    <reaction evidence="4">
        <text>3-iodo-L-thyronine + iodide + A + H(+) = 3,3'-diiodo-L-thyronine + AH2</text>
        <dbReference type="Rhea" id="RHEA:83783"/>
        <dbReference type="ChEBI" id="CHEBI:13193"/>
        <dbReference type="ChEBI" id="CHEBI:15378"/>
        <dbReference type="ChEBI" id="CHEBI:16382"/>
        <dbReference type="ChEBI" id="CHEBI:17499"/>
        <dbReference type="ChEBI" id="CHEBI:176514"/>
        <dbReference type="ChEBI" id="CHEBI:232627"/>
    </reaction>
    <physiologicalReaction direction="right-to-left" evidence="4">
        <dbReference type="Rhea" id="RHEA:83785"/>
    </physiologicalReaction>
</comment>
<comment type="catalytic activity">
    <reaction evidence="4">
        <text>3,3'-diiodothyronamine + iodide + A + H(+) = 3,3',5'-triiodothyronamine + AH2</text>
        <dbReference type="Rhea" id="RHEA:83795"/>
        <dbReference type="ChEBI" id="CHEBI:13193"/>
        <dbReference type="ChEBI" id="CHEBI:15378"/>
        <dbReference type="ChEBI" id="CHEBI:16382"/>
        <dbReference type="ChEBI" id="CHEBI:17499"/>
        <dbReference type="ChEBI" id="CHEBI:233341"/>
        <dbReference type="ChEBI" id="CHEBI:233343"/>
    </reaction>
    <physiologicalReaction direction="right-to-left" evidence="4">
        <dbReference type="Rhea" id="RHEA:83797"/>
    </physiologicalReaction>
</comment>
<comment type="catalytic activity">
    <reaction evidence="4">
        <text>3'-iodothyronamine + iodide + A + H(+) = 3',5'-diiodothyronamine + AH2</text>
        <dbReference type="Rhea" id="RHEA:83803"/>
        <dbReference type="ChEBI" id="CHEBI:13193"/>
        <dbReference type="ChEBI" id="CHEBI:15378"/>
        <dbReference type="ChEBI" id="CHEBI:16382"/>
        <dbReference type="ChEBI" id="CHEBI:17499"/>
        <dbReference type="ChEBI" id="CHEBI:233339"/>
        <dbReference type="ChEBI" id="CHEBI:233342"/>
    </reaction>
    <physiologicalReaction direction="right-to-left" evidence="4">
        <dbReference type="Rhea" id="RHEA:83805"/>
    </physiologicalReaction>
</comment>
<comment type="catalytic activity">
    <reaction evidence="4">
        <text>3-iodothyronamine + iodide + A + H(+) = 3,3'-diiodothyronamine + AH2</text>
        <dbReference type="Rhea" id="RHEA:83827"/>
        <dbReference type="ChEBI" id="CHEBI:13193"/>
        <dbReference type="ChEBI" id="CHEBI:15378"/>
        <dbReference type="ChEBI" id="CHEBI:16382"/>
        <dbReference type="ChEBI" id="CHEBI:17499"/>
        <dbReference type="ChEBI" id="CHEBI:231647"/>
        <dbReference type="ChEBI" id="CHEBI:233341"/>
    </reaction>
    <physiologicalReaction direction="right-to-left" evidence="4">
        <dbReference type="Rhea" id="RHEA:83829"/>
    </physiologicalReaction>
</comment>
<comment type="catalytic activity">
    <reaction evidence="4">
        <text>3,3'-diiodothyronamine + iodide + A + H(+) = 3,3',5-triiodothyronamine + AH2</text>
        <dbReference type="Rhea" id="RHEA:83811"/>
        <dbReference type="ChEBI" id="CHEBI:13193"/>
        <dbReference type="ChEBI" id="CHEBI:15378"/>
        <dbReference type="ChEBI" id="CHEBI:16382"/>
        <dbReference type="ChEBI" id="CHEBI:17499"/>
        <dbReference type="ChEBI" id="CHEBI:233341"/>
        <dbReference type="ChEBI" id="CHEBI:233426"/>
    </reaction>
    <physiologicalReaction direction="right-to-left" evidence="4">
        <dbReference type="Rhea" id="RHEA:83813"/>
    </physiologicalReaction>
</comment>
<comment type="catalytic activity">
    <reaction evidence="4">
        <text>3-iodothyronamine + iodide + A + H(+) = 3,5-diiodothyronamine + AH2</text>
        <dbReference type="Rhea" id="RHEA:83823"/>
        <dbReference type="ChEBI" id="CHEBI:13193"/>
        <dbReference type="ChEBI" id="CHEBI:15378"/>
        <dbReference type="ChEBI" id="CHEBI:16382"/>
        <dbReference type="ChEBI" id="CHEBI:17499"/>
        <dbReference type="ChEBI" id="CHEBI:231647"/>
        <dbReference type="ChEBI" id="CHEBI:233340"/>
    </reaction>
    <physiologicalReaction direction="right-to-left" evidence="4">
        <dbReference type="Rhea" id="RHEA:83825"/>
    </physiologicalReaction>
</comment>
<comment type="catalytic activity">
    <reaction evidence="1">
        <text>3,3'-diiodo-L-thyronine sulfate + iodide + A + H(+) = 3,3',5'-triiodo-L-thyronine sulfate + AH2</text>
        <dbReference type="Rhea" id="RHEA:83831"/>
        <dbReference type="ChEBI" id="CHEBI:13193"/>
        <dbReference type="ChEBI" id="CHEBI:15378"/>
        <dbReference type="ChEBI" id="CHEBI:16382"/>
        <dbReference type="ChEBI" id="CHEBI:17499"/>
        <dbReference type="ChEBI" id="CHEBI:176513"/>
        <dbReference type="ChEBI" id="CHEBI:176515"/>
    </reaction>
    <physiologicalReaction direction="right-to-left" evidence="1">
        <dbReference type="Rhea" id="RHEA:83833"/>
    </physiologicalReaction>
</comment>
<comment type="catalytic activity">
    <reaction evidence="1">
        <text>3,3',5'-triiodo-L-thyronine sulfate + iodide + A + H(+) = L-thyroxine sulfate + AH2</text>
        <dbReference type="Rhea" id="RHEA:83835"/>
        <dbReference type="ChEBI" id="CHEBI:13193"/>
        <dbReference type="ChEBI" id="CHEBI:15378"/>
        <dbReference type="ChEBI" id="CHEBI:16382"/>
        <dbReference type="ChEBI" id="CHEBI:17499"/>
        <dbReference type="ChEBI" id="CHEBI:176512"/>
        <dbReference type="ChEBI" id="CHEBI:176513"/>
    </reaction>
    <physiologicalReaction direction="right-to-left" evidence="1">
        <dbReference type="Rhea" id="RHEA:83837"/>
    </physiologicalReaction>
</comment>
<comment type="catalytic activity">
    <reaction evidence="1">
        <text>3,3'-diiodo-L-thyronine sulfate + iodide + A + H(+) = 3,3',5-triiodo-L-thyronine sulfate + AH2</text>
        <dbReference type="Rhea" id="RHEA:83751"/>
        <dbReference type="ChEBI" id="CHEBI:13193"/>
        <dbReference type="ChEBI" id="CHEBI:15378"/>
        <dbReference type="ChEBI" id="CHEBI:16382"/>
        <dbReference type="ChEBI" id="CHEBI:17499"/>
        <dbReference type="ChEBI" id="CHEBI:176511"/>
        <dbReference type="ChEBI" id="CHEBI:176515"/>
    </reaction>
    <physiologicalReaction direction="right-to-left" evidence="1">
        <dbReference type="Rhea" id="RHEA:83753"/>
    </physiologicalReaction>
</comment>
<comment type="biophysicochemical properties">
    <kinetics>
        <KM evidence="7">11 uM for 3,3',5'-triiodo-L-thyronine</KM>
        <Vmax evidence="7">54.0 pmol/min/mg enzyme towards 3,3',5'-triiodo-L-thyronine</Vmax>
    </kinetics>
</comment>
<comment type="subunit">
    <text evidence="2">Predominantly monomer. Can form homodimers but homodimerization is not essential for enzyme activity.</text>
</comment>
<comment type="subcellular location">
    <subcellularLocation>
        <location evidence="1">Cell membrane</location>
        <topology evidence="1">Single-pass type III membrane protein</topology>
    </subcellularLocation>
    <subcellularLocation>
        <location evidence="1">Endoplasmic reticulum membrane</location>
        <topology evidence="1">Single-pass type III membrane protein</topology>
    </subcellularLocation>
    <subcellularLocation>
        <location evidence="1">Basolateral cell membrane</location>
        <topology evidence="1">Single-pass type III membrane protein</topology>
    </subcellularLocation>
</comment>
<comment type="similarity">
    <text evidence="8">Belongs to the iodothyronine deiodinase family.</text>
</comment>
<gene>
    <name type="primary">DIO1</name>
</gene>
<sequence length="244" mass="28489">MGLSQLGLWLRRLWVLFQVALQVAVGKVFLILFPSRVKQHIVAMNRKNPHFSYDNWAPTLYSVQYFWFVLKVRWQRLEDRTEPGGLAPNCPVVRLSGQRCSIWDFMKGNRPLVLNFGSCTUPSFLFKFDQFKRLIEDFCSIADFLIIYIEEAHASDGWAFKNNVNIRNHRNLQDRLQAACLLLDRSPRCPVVVDTMKNQSSRLYAALPERLYVLQAGRILYKGKPGPWNYHPEEVRAVLEKLHS</sequence>
<protein>
    <recommendedName>
        <fullName>Type I iodothyronine deiodinase</fullName>
        <ecNumber evidence="3">1.21.99.3</ecNumber>
        <ecNumber evidence="3">1.21.99.4</ecNumber>
    </recommendedName>
    <alternativeName>
        <fullName>5DI</fullName>
    </alternativeName>
    <alternativeName>
        <fullName>DIOI</fullName>
    </alternativeName>
    <alternativeName>
        <fullName>Type 1 DI</fullName>
    </alternativeName>
    <alternativeName>
        <fullName>Type-I 5'-deiodinase</fullName>
    </alternativeName>
</protein>
<reference key="1">
    <citation type="journal article" date="2003" name="Endocrinology">
        <title>Molecular basis for the substrate selectivity of cat type I iodothyronine deiodinase.</title>
        <authorList>
            <person name="Kuiper G.G.J.M."/>
            <person name="Wassen F."/>
            <person name="Klootwijk W."/>
            <person name="van Toor H."/>
            <person name="Kaptein E."/>
            <person name="Visser T.J."/>
        </authorList>
    </citation>
    <scope>NUCLEOTIDE SEQUENCE [MRNA]</scope>
    <scope>FUNCTION</scope>
    <scope>CATALYTIC ACTIVITY</scope>
    <scope>BIOPHYSICOCHEMICAL PROPERTIES</scope>
    <scope>MUTAGENESIS OF LEU-60 AND TYR-61</scope>
    <source>
        <tissue>Liver</tissue>
    </source>
</reference>
<evidence type="ECO:0000250" key="1">
    <source>
        <dbReference type="UniProtKB" id="P24389"/>
    </source>
</evidence>
<evidence type="ECO:0000250" key="2">
    <source>
        <dbReference type="UniProtKB" id="P49895"/>
    </source>
</evidence>
<evidence type="ECO:0000250" key="3">
    <source>
        <dbReference type="UniProtKB" id="Q2QEI3"/>
    </source>
</evidence>
<evidence type="ECO:0000250" key="4">
    <source>
        <dbReference type="UniProtKB" id="Q61153"/>
    </source>
</evidence>
<evidence type="ECO:0000255" key="5"/>
<evidence type="ECO:0000255" key="6">
    <source>
        <dbReference type="PROSITE-ProRule" id="PRU10107"/>
    </source>
</evidence>
<evidence type="ECO:0000269" key="7">
    <source>
    </source>
</evidence>
<evidence type="ECO:0000305" key="8"/>
<evidence type="ECO:0000305" key="9">
    <source>
    </source>
</evidence>
<dbReference type="EC" id="1.21.99.3" evidence="3"/>
<dbReference type="EC" id="1.21.99.4" evidence="3"/>
<dbReference type="EMBL" id="AY347714">
    <property type="protein sequence ID" value="AAQ92943.1"/>
    <property type="molecule type" value="mRNA"/>
</dbReference>
<dbReference type="RefSeq" id="NP_001009267.1">
    <property type="nucleotide sequence ID" value="NM_001009267.1"/>
</dbReference>
<dbReference type="STRING" id="9685.ENSFCAP00000021400"/>
<dbReference type="PaxDb" id="9685-ENSFCAP00000021400"/>
<dbReference type="GeneID" id="493798"/>
<dbReference type="KEGG" id="fca:493798"/>
<dbReference type="CTD" id="1733"/>
<dbReference type="eggNOG" id="ENOG502QUGZ">
    <property type="taxonomic scope" value="Eukaryota"/>
</dbReference>
<dbReference type="InParanoid" id="Q6V915"/>
<dbReference type="OrthoDB" id="428577at2759"/>
<dbReference type="Proteomes" id="UP000011712">
    <property type="component" value="Unplaced"/>
</dbReference>
<dbReference type="GO" id="GO:0016323">
    <property type="term" value="C:basolateral plasma membrane"/>
    <property type="evidence" value="ECO:0007669"/>
    <property type="project" value="UniProtKB-SubCell"/>
</dbReference>
<dbReference type="GO" id="GO:0005789">
    <property type="term" value="C:endoplasmic reticulum membrane"/>
    <property type="evidence" value="ECO:0007669"/>
    <property type="project" value="UniProtKB-SubCell"/>
</dbReference>
<dbReference type="GO" id="GO:0004800">
    <property type="term" value="F:thyroxine 5'-deiodinase activity"/>
    <property type="evidence" value="ECO:0000250"/>
    <property type="project" value="UniProtKB"/>
</dbReference>
<dbReference type="GO" id="GO:0033798">
    <property type="term" value="F:thyroxine 5-deiodinase activity"/>
    <property type="evidence" value="ECO:0000250"/>
    <property type="project" value="UniProtKB"/>
</dbReference>
<dbReference type="GO" id="GO:0042446">
    <property type="term" value="P:hormone biosynthetic process"/>
    <property type="evidence" value="ECO:0007669"/>
    <property type="project" value="UniProtKB-KW"/>
</dbReference>
<dbReference type="GO" id="GO:0042404">
    <property type="term" value="P:thyroid hormone catabolic process"/>
    <property type="evidence" value="ECO:0000250"/>
    <property type="project" value="UniProtKB"/>
</dbReference>
<dbReference type="GO" id="GO:0042403">
    <property type="term" value="P:thyroid hormone metabolic process"/>
    <property type="evidence" value="ECO:0000318"/>
    <property type="project" value="GO_Central"/>
</dbReference>
<dbReference type="FunFam" id="3.40.30.10:FF:000192">
    <property type="entry name" value="Iodothyronine deiodinase"/>
    <property type="match status" value="1"/>
</dbReference>
<dbReference type="Gene3D" id="3.40.30.10">
    <property type="entry name" value="Glutaredoxin"/>
    <property type="match status" value="1"/>
</dbReference>
<dbReference type="InterPro" id="IPR000643">
    <property type="entry name" value="Iodothyronine_deiodinase"/>
</dbReference>
<dbReference type="InterPro" id="IPR008261">
    <property type="entry name" value="Iodothyronine_deiodinase_AS"/>
</dbReference>
<dbReference type="InterPro" id="IPR027252">
    <property type="entry name" value="Iodothyronine_deiodinase_I/III"/>
</dbReference>
<dbReference type="InterPro" id="IPR036249">
    <property type="entry name" value="Thioredoxin-like_sf"/>
</dbReference>
<dbReference type="PANTHER" id="PTHR11781">
    <property type="entry name" value="IODOTHYRONINE DEIODINASE"/>
    <property type="match status" value="1"/>
</dbReference>
<dbReference type="PANTHER" id="PTHR11781:SF22">
    <property type="entry name" value="TYPE I IODOTHYRONINE DEIODINASE"/>
    <property type="match status" value="1"/>
</dbReference>
<dbReference type="Pfam" id="PF00837">
    <property type="entry name" value="T4_deiodinase"/>
    <property type="match status" value="1"/>
</dbReference>
<dbReference type="PIRSF" id="PIRSF001330">
    <property type="entry name" value="IOD"/>
    <property type="match status" value="1"/>
</dbReference>
<dbReference type="PIRSF" id="PIRSF500144">
    <property type="entry name" value="IODI_III"/>
    <property type="match status" value="1"/>
</dbReference>
<dbReference type="SUPFAM" id="SSF52833">
    <property type="entry name" value="Thioredoxin-like"/>
    <property type="match status" value="1"/>
</dbReference>
<dbReference type="PROSITE" id="PS01205">
    <property type="entry name" value="T4_DEIODINASE"/>
    <property type="match status" value="1"/>
</dbReference>